<sequence>MKCLFSPNFMWMAAVVTSWVIIPAATDTSSAKSCSECHSNATCTVDGAATTCACQEGFTGDGLECVDLDECAVLGAHNCSATKSCVNTLGSYTCVCPEGFLLSSELGCEDVDECAEPGLSRCHALATCINGEGNYSCVCPAGYLGDGRHCECSPGSCGPGLDCVREGDALVCVDPCQVHRILDEYWRSTEYGSGYICDVSLGGWYRFVGQAGVRLPETCVPVLHCNTAAPMWLNGTHPSSDEGIVNRVACAHWSGDCCLWDAPIQVKACAGGYYVYNLTAPPECHLAYCTDPSSVEGTCEECRVDEDCKSDNGEWHCQCKQDFNVTDLSLLERRLECGVDDIKLSLSKCQLKSLGFEKVFMYLHDSQCSGFTERGDRDWMSVVTPARDGPCGTVMTRNETHATYSNTLYLADEIIIRDLNIRINFACSYPLDMKVSLKTSLQPMVSALNISMGGTGTFTVRMALFQSPAYTQPYQGSSVTLSTEAFLYVGTMLDGGDLSRFVLLMTNCYATPSSNATDPLKYFIIQDRCPRAADSTIQVEENGESPQGRFSVQMFRFAGNYDLVYLHCEVYLCDTVNEKCRPTCPETRFRSGSIIDQTRVLNLGPITRKGGQAAMSRAAPSSLGLLQVWLPLLLSATLTLMSP</sequence>
<feature type="signal peptide" evidence="1">
    <location>
        <begin position="1"/>
        <end position="26"/>
    </location>
</feature>
<feature type="chain" id="PRO_0000041667" description="Uromodulin">
    <location>
        <begin position="27"/>
        <end position="621"/>
    </location>
</feature>
<feature type="chain" id="PRO_0000407907" description="Uromodulin, secreted form">
    <location>
        <begin position="27"/>
        <end position="589"/>
    </location>
</feature>
<feature type="propeptide" id="PRO_0000041668" description="Removed in mature form" evidence="3">
    <location>
        <begin position="622"/>
        <end position="643"/>
    </location>
</feature>
<feature type="domain" description="EGF-like 1" evidence="4">
    <location>
        <begin position="32"/>
        <end position="66"/>
    </location>
</feature>
<feature type="domain" description="EGF-like 2; calcium-binding" evidence="4">
    <location>
        <begin position="67"/>
        <end position="109"/>
    </location>
</feature>
<feature type="domain" description="EGF-like 3; calcium-binding" evidence="4">
    <location>
        <begin position="110"/>
        <end position="151"/>
    </location>
</feature>
<feature type="domain" description="EGF-like 4" evidence="1">
    <location>
        <begin position="294"/>
        <end position="325"/>
    </location>
</feature>
<feature type="domain" description="ZP" evidence="5">
    <location>
        <begin position="336"/>
        <end position="587"/>
    </location>
</feature>
<feature type="region of interest" description="Beta hairpin" evidence="1">
    <location>
        <begin position="152"/>
        <end position="173"/>
    </location>
</feature>
<feature type="region of interest" description="D10C" evidence="1">
    <location>
        <begin position="174"/>
        <end position="293"/>
    </location>
</feature>
<feature type="region of interest" description="ZP-N" evidence="1">
    <location>
        <begin position="336"/>
        <end position="431"/>
    </location>
</feature>
<feature type="region of interest" description="Flexible ZP-N/ZP-C linker; important for secretion and polymerization into filaments" evidence="1">
    <location>
        <begin position="432"/>
        <end position="455"/>
    </location>
</feature>
<feature type="region of interest" description="ZP-C" evidence="1">
    <location>
        <begin position="456"/>
        <end position="587"/>
    </location>
</feature>
<feature type="region of interest" description="Internal hydrophobic patch (IHP)" evidence="1">
    <location>
        <begin position="456"/>
        <end position="466"/>
    </location>
</feature>
<feature type="region of interest" description="Essential for cleavage by HPN" evidence="1">
    <location>
        <begin position="588"/>
        <end position="591"/>
    </location>
</feature>
<feature type="region of interest" description="External hydrophobic patch (EHP); regulates polymerization into filaments" evidence="1">
    <location>
        <begin position="600"/>
        <end position="608"/>
    </location>
</feature>
<feature type="site" description="Cleavage" evidence="1">
    <location>
        <begin position="589"/>
        <end position="590"/>
    </location>
</feature>
<feature type="lipid moiety-binding region" description="GPI-anchor amidated serine" evidence="3">
    <location>
        <position position="621"/>
    </location>
</feature>
<feature type="glycosylation site" description="N-linked (GlcNAc...) asparagine" evidence="3">
    <location>
        <position position="40"/>
    </location>
</feature>
<feature type="glycosylation site" description="N-linked (GlcNAc...) asparagine" evidence="3">
    <location>
        <position position="78"/>
    </location>
</feature>
<feature type="glycosylation site" description="N-linked (GlcNAc...) asparagine" evidence="3">
    <location>
        <position position="134"/>
    </location>
</feature>
<feature type="glycosylation site" description="N-linked (GlcNAc...) asparagine" evidence="3">
    <location>
        <position position="234"/>
    </location>
</feature>
<feature type="glycosylation site" description="N-linked (GlcNAc...) asparagine" evidence="3">
    <location>
        <position position="277"/>
    </location>
</feature>
<feature type="glycosylation site" description="N-linked (GlcNAc...) asparagine" evidence="3">
    <location>
        <position position="324"/>
    </location>
</feature>
<feature type="glycosylation site" description="N-linked (GlcNAc...) asparagine" evidence="3">
    <location>
        <position position="398"/>
    </location>
</feature>
<feature type="glycosylation site" description="N-linked (GlcNAc...) asparagine" evidence="3">
    <location>
        <position position="449"/>
    </location>
</feature>
<feature type="glycosylation site" description="N-linked (GlcNAc...) asparagine" evidence="3">
    <location>
        <position position="515"/>
    </location>
</feature>
<feature type="disulfide bond" evidence="4">
    <location>
        <begin position="34"/>
        <end position="43"/>
    </location>
</feature>
<feature type="disulfide bond" evidence="4">
    <location>
        <begin position="37"/>
        <end position="52"/>
    </location>
</feature>
<feature type="disulfide bond" evidence="4">
    <location>
        <begin position="54"/>
        <end position="65"/>
    </location>
</feature>
<feature type="disulfide bond" evidence="4">
    <location>
        <begin position="71"/>
        <end position="85"/>
    </location>
</feature>
<feature type="disulfide bond" evidence="4">
    <location>
        <begin position="79"/>
        <end position="94"/>
    </location>
</feature>
<feature type="disulfide bond" evidence="4">
    <location>
        <begin position="96"/>
        <end position="108"/>
    </location>
</feature>
<feature type="disulfide bond" evidence="4">
    <location>
        <begin position="114"/>
        <end position="128"/>
    </location>
</feature>
<feature type="disulfide bond" evidence="4">
    <location>
        <begin position="122"/>
        <end position="137"/>
    </location>
</feature>
<feature type="disulfide bond" evidence="4">
    <location>
        <begin position="139"/>
        <end position="150"/>
    </location>
</feature>
<feature type="disulfide bond" evidence="1">
    <location>
        <begin position="152"/>
        <end position="163"/>
    </location>
</feature>
<feature type="disulfide bond" evidence="1">
    <location>
        <begin position="157"/>
        <end position="172"/>
    </location>
</feature>
<feature type="disulfide bond" evidence="1">
    <location>
        <begin position="176"/>
        <end position="269"/>
    </location>
</feature>
<feature type="disulfide bond" evidence="1">
    <location>
        <begin position="197"/>
        <end position="284"/>
    </location>
</feature>
<feature type="disulfide bond" evidence="1">
    <location>
        <begin position="219"/>
        <end position="257"/>
    </location>
</feature>
<feature type="disulfide bond" evidence="1">
    <location>
        <begin position="225"/>
        <end position="289"/>
    </location>
</feature>
<feature type="disulfide bond" evidence="1">
    <location>
        <begin position="250"/>
        <end position="258"/>
    </location>
</feature>
<feature type="disulfide bond" evidence="1">
    <location>
        <begin position="299"/>
        <end position="308"/>
    </location>
</feature>
<feature type="disulfide bond" evidence="1">
    <location>
        <begin position="302"/>
        <end position="317"/>
    </location>
</feature>
<feature type="disulfide bond" evidence="1">
    <location>
        <begin position="319"/>
        <end position="349"/>
    </location>
</feature>
<feature type="disulfide bond" evidence="1">
    <location>
        <begin position="337"/>
        <end position="427"/>
    </location>
</feature>
<feature type="disulfide bond" evidence="1">
    <location>
        <begin position="368"/>
        <end position="391"/>
    </location>
</feature>
<feature type="disulfide bond" evidence="4">
    <location>
        <begin position="508"/>
        <end position="568"/>
    </location>
</feature>
<feature type="disulfide bond" evidence="1">
    <location>
        <begin position="529"/>
        <end position="584"/>
    </location>
</feature>
<feature type="disulfide bond" evidence="1">
    <location>
        <begin position="573"/>
        <end position="580"/>
    </location>
</feature>
<evidence type="ECO:0000250" key="1">
    <source>
        <dbReference type="UniProtKB" id="P07911"/>
    </source>
</evidence>
<evidence type="ECO:0000250" key="2">
    <source>
        <dbReference type="UniProtKB" id="Q91X17"/>
    </source>
</evidence>
<evidence type="ECO:0000255" key="3"/>
<evidence type="ECO:0000255" key="4">
    <source>
        <dbReference type="PROSITE-ProRule" id="PRU00076"/>
    </source>
</evidence>
<evidence type="ECO:0000255" key="5">
    <source>
        <dbReference type="PROSITE-ProRule" id="PRU00375"/>
    </source>
</evidence>
<proteinExistence type="evidence at transcript level"/>
<dbReference type="EMBL" id="S75958">
    <property type="protein sequence ID" value="AAB33312.1"/>
    <property type="molecule type" value="mRNA"/>
</dbReference>
<dbReference type="RefSeq" id="NP_776638.1">
    <property type="nucleotide sequence ID" value="NM_174213.2"/>
</dbReference>
<dbReference type="SMR" id="P48733"/>
<dbReference type="FunCoup" id="P48733">
    <property type="interactions" value="29"/>
</dbReference>
<dbReference type="STRING" id="9913.ENSBTAP00000061186"/>
<dbReference type="GlyCosmos" id="P48733">
    <property type="glycosylation" value="9 sites, No reported glycans"/>
</dbReference>
<dbReference type="GlyGen" id="P48733">
    <property type="glycosylation" value="9 sites"/>
</dbReference>
<dbReference type="PaxDb" id="9913-ENSBTAP00000043345"/>
<dbReference type="GeneID" id="281567"/>
<dbReference type="KEGG" id="bta:281567"/>
<dbReference type="CTD" id="7369"/>
<dbReference type="eggNOG" id="ENOG502QT6B">
    <property type="taxonomic scope" value="Eukaryota"/>
</dbReference>
<dbReference type="InParanoid" id="P48733"/>
<dbReference type="OrthoDB" id="2015116at2759"/>
<dbReference type="Proteomes" id="UP000009136">
    <property type="component" value="Unplaced"/>
</dbReference>
<dbReference type="GO" id="GO:0016324">
    <property type="term" value="C:apical plasma membrane"/>
    <property type="evidence" value="ECO:0000250"/>
    <property type="project" value="UniProtKB"/>
</dbReference>
<dbReference type="GO" id="GO:0016323">
    <property type="term" value="C:basolateral plasma membrane"/>
    <property type="evidence" value="ECO:0000250"/>
    <property type="project" value="UniProtKB"/>
</dbReference>
<dbReference type="GO" id="GO:0009986">
    <property type="term" value="C:cell surface"/>
    <property type="evidence" value="ECO:0000318"/>
    <property type="project" value="GO_Central"/>
</dbReference>
<dbReference type="GO" id="GO:0060170">
    <property type="term" value="C:ciliary membrane"/>
    <property type="evidence" value="ECO:0007669"/>
    <property type="project" value="UniProtKB-SubCell"/>
</dbReference>
<dbReference type="GO" id="GO:0005929">
    <property type="term" value="C:cilium"/>
    <property type="evidence" value="ECO:0000250"/>
    <property type="project" value="UniProtKB"/>
</dbReference>
<dbReference type="GO" id="GO:0005615">
    <property type="term" value="C:extracellular space"/>
    <property type="evidence" value="ECO:0000318"/>
    <property type="project" value="GO_Central"/>
</dbReference>
<dbReference type="GO" id="GO:0016020">
    <property type="term" value="C:membrane"/>
    <property type="evidence" value="ECO:0000250"/>
    <property type="project" value="UniProtKB"/>
</dbReference>
<dbReference type="GO" id="GO:0098552">
    <property type="term" value="C:side of membrane"/>
    <property type="evidence" value="ECO:0007669"/>
    <property type="project" value="UniProtKB-KW"/>
</dbReference>
<dbReference type="GO" id="GO:0000922">
    <property type="term" value="C:spindle pole"/>
    <property type="evidence" value="ECO:0000250"/>
    <property type="project" value="UniProtKB"/>
</dbReference>
<dbReference type="GO" id="GO:0005509">
    <property type="term" value="F:calcium ion binding"/>
    <property type="evidence" value="ECO:0007669"/>
    <property type="project" value="InterPro"/>
</dbReference>
<dbReference type="GO" id="GO:0140367">
    <property type="term" value="P:antibacterial innate immune response"/>
    <property type="evidence" value="ECO:0000250"/>
    <property type="project" value="UniProtKB"/>
</dbReference>
<dbReference type="GO" id="GO:0050829">
    <property type="term" value="P:defense response to Gram-negative bacterium"/>
    <property type="evidence" value="ECO:0000250"/>
    <property type="project" value="UniProtKB"/>
</dbReference>
<dbReference type="GO" id="GO:1990266">
    <property type="term" value="P:neutrophil migration"/>
    <property type="evidence" value="ECO:0000318"/>
    <property type="project" value="GO_Central"/>
</dbReference>
<dbReference type="CDD" id="cd00054">
    <property type="entry name" value="EGF_CA"/>
    <property type="match status" value="2"/>
</dbReference>
<dbReference type="FunFam" id="2.60.40.4100:FF:000001">
    <property type="entry name" value="alpha-tectorin isoform X1"/>
    <property type="match status" value="1"/>
</dbReference>
<dbReference type="FunFam" id="2.10.25.10:FF:000038">
    <property type="entry name" value="Fibrillin 2"/>
    <property type="match status" value="2"/>
</dbReference>
<dbReference type="FunFam" id="2.60.40.3210:FF:000003">
    <property type="entry name" value="Glycoprotein 2"/>
    <property type="match status" value="1"/>
</dbReference>
<dbReference type="FunFam" id="2.10.25.10:FF:000678">
    <property type="entry name" value="Uromodulin"/>
    <property type="match status" value="1"/>
</dbReference>
<dbReference type="Gene3D" id="2.10.25.10">
    <property type="entry name" value="Laminin"/>
    <property type="match status" value="3"/>
</dbReference>
<dbReference type="Gene3D" id="2.60.40.4100">
    <property type="entry name" value="Zona pellucida, ZP-C domain"/>
    <property type="match status" value="1"/>
</dbReference>
<dbReference type="Gene3D" id="2.60.40.3210">
    <property type="entry name" value="Zona pellucida, ZP-N domain"/>
    <property type="match status" value="1"/>
</dbReference>
<dbReference type="InterPro" id="IPR001881">
    <property type="entry name" value="EGF-like_Ca-bd_dom"/>
</dbReference>
<dbReference type="InterPro" id="IPR000742">
    <property type="entry name" value="EGF-like_dom"/>
</dbReference>
<dbReference type="InterPro" id="IPR000152">
    <property type="entry name" value="EGF-type_Asp/Asn_hydroxyl_site"/>
</dbReference>
<dbReference type="InterPro" id="IPR018097">
    <property type="entry name" value="EGF_Ca-bd_CS"/>
</dbReference>
<dbReference type="InterPro" id="IPR009030">
    <property type="entry name" value="Growth_fac_rcpt_cys_sf"/>
</dbReference>
<dbReference type="InterPro" id="IPR049883">
    <property type="entry name" value="NOTCH1_EGF-like"/>
</dbReference>
<dbReference type="InterPro" id="IPR055355">
    <property type="entry name" value="ZP-C"/>
</dbReference>
<dbReference type="InterPro" id="IPR042235">
    <property type="entry name" value="ZP-C_dom"/>
</dbReference>
<dbReference type="InterPro" id="IPR055356">
    <property type="entry name" value="ZP-N"/>
</dbReference>
<dbReference type="InterPro" id="IPR048290">
    <property type="entry name" value="ZP_chr"/>
</dbReference>
<dbReference type="InterPro" id="IPR001507">
    <property type="entry name" value="ZP_dom"/>
</dbReference>
<dbReference type="InterPro" id="IPR017977">
    <property type="entry name" value="ZP_dom_CS"/>
</dbReference>
<dbReference type="PANTHER" id="PTHR14002">
    <property type="entry name" value="ENDOGLIN/TGF-BETA RECEPTOR TYPE III"/>
    <property type="match status" value="1"/>
</dbReference>
<dbReference type="PANTHER" id="PTHR14002:SF40">
    <property type="entry name" value="UROMODULIN"/>
    <property type="match status" value="1"/>
</dbReference>
<dbReference type="Pfam" id="PF23283">
    <property type="entry name" value="D8C_UMOD"/>
    <property type="match status" value="1"/>
</dbReference>
<dbReference type="Pfam" id="PF07645">
    <property type="entry name" value="EGF_CA"/>
    <property type="match status" value="2"/>
</dbReference>
<dbReference type="Pfam" id="PF00100">
    <property type="entry name" value="Zona_pellucida"/>
    <property type="match status" value="1"/>
</dbReference>
<dbReference type="Pfam" id="PF23344">
    <property type="entry name" value="ZP-N"/>
    <property type="match status" value="1"/>
</dbReference>
<dbReference type="PRINTS" id="PR00023">
    <property type="entry name" value="ZPELLUCIDA"/>
</dbReference>
<dbReference type="SMART" id="SM00181">
    <property type="entry name" value="EGF"/>
    <property type="match status" value="3"/>
</dbReference>
<dbReference type="SMART" id="SM00179">
    <property type="entry name" value="EGF_CA"/>
    <property type="match status" value="2"/>
</dbReference>
<dbReference type="SMART" id="SM00241">
    <property type="entry name" value="ZP"/>
    <property type="match status" value="1"/>
</dbReference>
<dbReference type="SUPFAM" id="SSF57184">
    <property type="entry name" value="Growth factor receptor domain"/>
    <property type="match status" value="1"/>
</dbReference>
<dbReference type="PROSITE" id="PS00010">
    <property type="entry name" value="ASX_HYDROXYL"/>
    <property type="match status" value="2"/>
</dbReference>
<dbReference type="PROSITE" id="PS01186">
    <property type="entry name" value="EGF_2"/>
    <property type="match status" value="3"/>
</dbReference>
<dbReference type="PROSITE" id="PS50026">
    <property type="entry name" value="EGF_3"/>
    <property type="match status" value="3"/>
</dbReference>
<dbReference type="PROSITE" id="PS01187">
    <property type="entry name" value="EGF_CA"/>
    <property type="match status" value="2"/>
</dbReference>
<dbReference type="PROSITE" id="PS00682">
    <property type="entry name" value="ZP_1"/>
    <property type="match status" value="1"/>
</dbReference>
<dbReference type="PROSITE" id="PS51034">
    <property type="entry name" value="ZP_2"/>
    <property type="match status" value="1"/>
</dbReference>
<accession>P48733</accession>
<gene>
    <name type="primary">UMOD</name>
</gene>
<keyword id="KW-1003">Cell membrane</keyword>
<keyword id="KW-0966">Cell projection</keyword>
<keyword id="KW-1015">Disulfide bond</keyword>
<keyword id="KW-0245">EGF-like domain</keyword>
<keyword id="KW-0325">Glycoprotein</keyword>
<keyword id="KW-0336">GPI-anchor</keyword>
<keyword id="KW-0391">Immunity</keyword>
<keyword id="KW-0399">Innate immunity</keyword>
<keyword id="KW-0449">Lipoprotein</keyword>
<keyword id="KW-0472">Membrane</keyword>
<keyword id="KW-1185">Reference proteome</keyword>
<keyword id="KW-0677">Repeat</keyword>
<keyword id="KW-0964">Secreted</keyword>
<keyword id="KW-0732">Signal</keyword>
<comment type="function">
    <molecule>Uromodulin</molecule>
    <text evidence="1">Functions in biogenesis and organization of the apical membrane of epithelial cells of the thick ascending limb of Henle's loop (TALH), where it promotes formation of complex filamentous gel-like structure that may play a role in the water barrier permeability. May serve as a receptor for binding and endocytosis of cytokines (IL-1, IL-2) and TNF. Facilitates neutrophil migration across renal epithelia.</text>
</comment>
<comment type="function">
    <molecule>Uromodulin, secreted form</molecule>
    <text evidence="2">In the urine, may contribute to colloid osmotic pressure, retards passage of positively charged electrolytes, and inhibits formation of liquid containing supersaturated salts and subsequent formation of salt crystals. Protects against urinary tract infections by binding to type 1 fimbriated E.coli. Binds to bacterial adhesin fimH which mediates the stable formation of bacterial aggregates, prevents the binding of E.coli to uroplakins UPK1A and UPK1B which act as urothelial receptors for type I fimbriae, and allows for pathogen clearance through micturation. Also promotes aggregation of other bacteria including K.pneumoniae, P.aeruginosa and S.mitis and so may also protect against other uropathogens.</text>
</comment>
<comment type="subunit">
    <molecule>Uromodulin, secreted form</molecule>
    <text evidence="1">Homodimer that then polymerizes into long filaments. The filaments can additionally assemble laterally to form a sheet. The filaments consist of a zigzag-shaped backbone with laterally protruding arms which interact with bacterial adhesin fimH. Two fimH molecules can bind to a single UMOD monomer.</text>
</comment>
<comment type="subcellular location">
    <subcellularLocation>
        <location evidence="1">Apical cell membrane</location>
        <topology evidence="1">Lipid-anchor</topology>
        <topology evidence="1">GPI-anchor</topology>
    </subcellularLocation>
    <subcellularLocation>
        <location evidence="1">Basolateral cell membrane</location>
        <topology evidence="1">Lipid-anchor</topology>
        <topology evidence="1">GPI-anchor</topology>
    </subcellularLocation>
    <subcellularLocation>
        <location evidence="1">Cell projection</location>
        <location evidence="1">Cilium membrane</location>
    </subcellularLocation>
    <text evidence="1">Only a small fraction sorts to the basolateral pole of tubular epithelial cells compared to apical localization. Secreted into urine after cleavage. Colocalizes with NPHP1 and KIF3A.</text>
</comment>
<comment type="subcellular location">
    <molecule>Uromodulin, secreted form</molecule>
    <subcellularLocation>
        <location evidence="1">Secreted</location>
    </subcellularLocation>
    <text evidence="1">Detected in urine.</text>
</comment>
<comment type="domain">
    <text evidence="1">The ZP domain mediates polymerization, leading to the formation of long filaments. The core of the filament consists of interlocked ZP domains which assemble into a helical structure. Each ZP domain consists of an N-terminal (ZP-N) and C-terminal (ZP-C) region connected by a flexible linker; the linker allows the ZP domain to wrap around the ZP-C subdomain of the preceding subunit. The heavily glycosylated N-terminal part of the protein (containing several EGF-like domains) forms branches which protrude from the core and are involved in pathogen capture.</text>
</comment>
<comment type="PTM">
    <text evidence="1">N-glycosylated.</text>
</comment>
<comment type="PTM">
    <text evidence="1">Proteolytically cleaved at a conserved C-terminal proteolytic cleavage site to generate the secreted form found in urine. This cleavage is catalyzed by HPN.</text>
</comment>
<name>UROM_BOVIN</name>
<reference key="1">
    <citation type="journal article" date="1994" name="Gene Expr.">
        <title>Bovine and rodent Tamm-Horsfall protein (THP) genes: cloning, structural analysis, and promoter identification.</title>
        <authorList>
            <person name="Yu H."/>
            <person name="Papa F."/>
            <person name="Sukhatme V.P."/>
        </authorList>
    </citation>
    <scope>NUCLEOTIDE SEQUENCE [MRNA]</scope>
    <source>
        <tissue>Kidney</tissue>
    </source>
</reference>
<organism>
    <name type="scientific">Bos taurus</name>
    <name type="common">Bovine</name>
    <dbReference type="NCBI Taxonomy" id="9913"/>
    <lineage>
        <taxon>Eukaryota</taxon>
        <taxon>Metazoa</taxon>
        <taxon>Chordata</taxon>
        <taxon>Craniata</taxon>
        <taxon>Vertebrata</taxon>
        <taxon>Euteleostomi</taxon>
        <taxon>Mammalia</taxon>
        <taxon>Eutheria</taxon>
        <taxon>Laurasiatheria</taxon>
        <taxon>Artiodactyla</taxon>
        <taxon>Ruminantia</taxon>
        <taxon>Pecora</taxon>
        <taxon>Bovidae</taxon>
        <taxon>Bovinae</taxon>
        <taxon>Bos</taxon>
    </lineage>
</organism>
<protein>
    <recommendedName>
        <fullName>Uromodulin</fullName>
    </recommendedName>
    <alternativeName>
        <fullName>Tamm-Horsfall urinary glycoprotein</fullName>
        <shortName>THP</shortName>
    </alternativeName>
    <component>
        <recommendedName>
            <fullName>Uromodulin, secreted form</fullName>
        </recommendedName>
    </component>
</protein>